<accession>Q67926</accession>
<accession>Q67922</accession>
<accession>Q67927</accession>
<comment type="function">
    <text evidence="4">The large envelope protein exists in two topological conformations, one which is termed 'external' or Le-HBsAg and the other 'internal' or Li-HBsAg. In its external conformation the protein attaches the virus to cell receptors and thereby initiating infection. This interaction determines the species specificity and liver tropism. This attachment induces virion internalization predominantly through caveolin-mediated endocytosis. The large envelope protein also assures fusion between virion membrane and endosomal membrane. In its internal conformation the protein plays a role in virion morphogenesis and mediates the contact with the nucleocapsid like a matrix protein.</text>
</comment>
<comment type="function">
    <text evidence="4">The middle envelope protein plays an important role in the budding of the virion. It is involved in the induction of budding in a nucleocapsid independent way. In this process the majority of envelope proteins bud to form subviral lipoprotein particles of 22 nm of diameter that do not contain a nucleocapsid.</text>
</comment>
<comment type="subunit">
    <text evidence="3">Interacts (via its myristoylated pre-S1 region) with the host SLC10A1/NTCP; this interaction is essential for viral entry.</text>
</comment>
<comment type="subunit">
    <molecule>Isoform L</molecule>
    <text evidence="2">In its internal form (Li-HBsAg), interacts with the capsid protein and with the isoform S. Interacts with host chaperone CANX.</text>
</comment>
<comment type="subunit">
    <molecule>Isoform M</molecule>
    <text evidence="2">Associates with host chaperone CANX through its pre-S2 N glycan; this association may be essential for isoform M proper secretion.</text>
</comment>
<comment type="subunit">
    <molecule>Isoform S</molecule>
    <text evidence="2">Interacts with isoform L. Interacts with the antigens of satellite virus HDV (HDVAgs); this interaction is required for encapsidation of HDV genomic RNA.</text>
</comment>
<comment type="subcellular location">
    <subcellularLocation>
        <location evidence="4">Virion membrane</location>
    </subcellularLocation>
</comment>
<comment type="alternative products">
    <event type="alternative splicing"/>
    <event type="alternative initiation"/>
    <isoform>
        <id>Q67926-1</id>
        <name>L</name>
        <name>Large envelope protein</name>
        <name>LHB</name>
        <name>L-HBsAg</name>
        <sequence type="displayed"/>
    </isoform>
    <isoform>
        <id>Q67926-2</id>
        <name>M</name>
        <name>Middle envelope protein</name>
        <name>MHB</name>
        <name>M-HBsAg</name>
        <sequence type="described" ref="VSP_031378"/>
    </isoform>
    <isoform>
        <id>Q67926-3</id>
        <name>S</name>
        <name>Small envelope protein</name>
        <name>SHB</name>
        <name>S-HBsAg</name>
        <sequence type="described" ref="VSP_031377"/>
    </isoform>
</comment>
<comment type="domain">
    <text evidence="4">The large envelope protein is synthesized with the pre-S region at the cytosolic side of the endoplasmic reticulum and, hence will be within the virion after budding. Therefore the pre-S region is not N-glycosylated. Later a post-translational translocation of N-terminal pre-S and TM1 domains occur in about 50% of proteins at the virion surface. These molecules change their topology by an unknown mechanism, resulting in exposure of pre-S region at virion surface. For isoform M in contrast, the pre-S2 region is translocated cotranslationally to the endoplasmic reticulum lumen and is N-glycosylated.</text>
</comment>
<comment type="PTM">
    <text evidence="1 4">Isoform M is N-terminally acetylated by host at a ratio of 90%, and N-glycosylated by host at the pre-S2 region.</text>
</comment>
<comment type="PTM">
    <text evidence="3 4">Myristoylated; this modification is essential for its interaction with the host protein SLC10A1/NTCP.</text>
</comment>
<comment type="biotechnology">
    <text>Systematic vaccination of individuals at risk of exposure to the virus has been the main method of controlling the morbidity and mortality associated with hepatitis B. The first hepatitis B vaccine was manufactured by the purification and inactivation of HBsAg obtained from the plasma of chronic hepatitis B virus carriers. The vaccine is now produced by recombinant DNA techniques and expression of the S isoform in yeast cells. The pre-S region do not seem to induce strong enough antigenic response.</text>
</comment>
<comment type="similarity">
    <text evidence="4">Belongs to the orthohepadnavirus major surface antigen family.</text>
</comment>
<name>HBSAG_HBVB6</name>
<reference key="1">
    <citation type="journal article" date="1996" name="J. Viral Hepat.">
        <title>Whole genome analysis of hepatitis B virus from four cases of fulminant hepatitis: genetic variability and its potential role in disease pathogenicity.</title>
        <authorList>
            <person name="Alexopoulou A."/>
            <person name="Karayiannis P."/>
            <person name="Hadziyannis S.J."/>
        </authorList>
    </citation>
    <scope>NUCLEOTIDE SEQUENCE [GENOMIC DNA]</scope>
</reference>
<reference key="2">
    <citation type="journal article" date="1996" name="Intervirology">
        <title>Functions of the large hepatitis B virus surface protein in viral particle morphogenesis.</title>
        <authorList>
            <person name="Bruss V."/>
            <person name="Gerhardt E."/>
            <person name="Vieluf K."/>
            <person name="Wunderlich G."/>
        </authorList>
    </citation>
    <scope>REVIEW</scope>
</reference>
<reference key="3">
    <citation type="journal article" date="1998" name="Adv. Exp. Med. Biol.">
        <title>Role of glycan processing in hepatitis B virus envelope protein trafficking.</title>
        <authorList>
            <person name="Block T.M."/>
            <person name="Lu X."/>
            <person name="Mehta A."/>
            <person name="Park J."/>
            <person name="Blumberg B.S."/>
            <person name="Dwek R."/>
        </authorList>
    </citation>
    <scope>REVIEW</scope>
</reference>
<reference key="4">
    <citation type="journal article" date="2004" name="Virus Res.">
        <title>Envelopment of the hepatitis B virus nucleocapsid.</title>
        <authorList>
            <person name="Bruss V."/>
        </authorList>
    </citation>
    <scope>REVIEW</scope>
</reference>
<reference key="5">
    <citation type="journal article" date="2006" name="Cancer Sci.">
        <title>Hepatitis B virus pre-S mutants, endoplasmic reticulum stress and hepatocarcinogenesis.</title>
        <authorList>
            <person name="Wang H.C."/>
            <person name="Huang W."/>
            <person name="Lai M.D."/>
            <person name="Su I.J."/>
        </authorList>
    </citation>
    <scope>REVIEW</scope>
</reference>
<proteinExistence type="evidence at protein level"/>
<sequence>MGGWSSKPRKGMGTNLSVPNPLGFFPDHQLDPAFKANSENPDWDLNPHKDNWPDANKVGVGAFGPGFTPPHGGLLGWSPQAQGLLTTVPAAPPPASTNRQSGRQPTPFSPPLRDTHPQAMQWNSTTFLQTLQDSRVRALYLPAGGSSSGTVSPAQNTVSAISSISSKTGDPVPNMENIASGLLGHLLVLQAGFFSLTKILTIPQSLDSWWTSLNFLGGTPACPGQNSQSQISSHSPTCCPPICPGYRWMCLRRFIIFLCILLLCLIFLLVLLDYQGMLPVCPLTPGSTTTSTGPCKTCTTPAQGTSMFPSCCCTKPTDGNCTCIPIPSSWAFAKYLWGWASVRFSWLSLLVPFVQWFVGLSPTVWLSVIWMMWFWGPSLYNILRPFMPLLPTFFCLWVYI</sequence>
<organism>
    <name type="scientific">Hepatitis B virus genotype B2 subtype adw (isolate China/patient4/1996)</name>
    <name type="common">HBV-B</name>
    <dbReference type="NCBI Taxonomy" id="489463"/>
    <lineage>
        <taxon>Viruses</taxon>
        <taxon>Riboviria</taxon>
        <taxon>Pararnavirae</taxon>
        <taxon>Artverviricota</taxon>
        <taxon>Revtraviricetes</taxon>
        <taxon>Blubervirales</taxon>
        <taxon>Hepadnaviridae</taxon>
        <taxon>Orthohepadnavirus</taxon>
        <taxon>Hepatitis B virus</taxon>
    </lineage>
</organism>
<organismHost>
    <name type="scientific">Homo sapiens</name>
    <name type="common">Human</name>
    <dbReference type="NCBI Taxonomy" id="9606"/>
</organismHost>
<organismHost>
    <name type="scientific">Pan troglodytes</name>
    <name type="common">Chimpanzee</name>
    <dbReference type="NCBI Taxonomy" id="9598"/>
</organismHost>
<gene>
    <name evidence="4" type="primary">S</name>
</gene>
<protein>
    <recommendedName>
        <fullName evidence="4">Large envelope protein</fullName>
    </recommendedName>
    <alternativeName>
        <fullName evidence="4">L glycoprotein</fullName>
    </alternativeName>
    <alternativeName>
        <fullName evidence="4">L-HBsAg</fullName>
        <shortName evidence="4">LHB</shortName>
    </alternativeName>
    <alternativeName>
        <fullName evidence="4">Large S protein</fullName>
    </alternativeName>
    <alternativeName>
        <fullName evidence="4">Large surface protein</fullName>
    </alternativeName>
    <alternativeName>
        <fullName evidence="4">Major surface antigen</fullName>
    </alternativeName>
</protein>
<feature type="initiator methionine" description="Removed; by host" evidence="4">
    <location>
        <position position="1"/>
    </location>
</feature>
<feature type="chain" id="PRO_0000319077" description="Large envelope protein" evidence="4">
    <location>
        <begin position="2"/>
        <end position="400"/>
    </location>
</feature>
<feature type="topological domain" description="Intravirion; in internal conformation" evidence="4">
    <location>
        <begin position="2"/>
        <end position="253"/>
    </location>
</feature>
<feature type="topological domain" description="Virion surface; in external conformation" evidence="4">
    <location>
        <begin position="2"/>
        <end position="181"/>
    </location>
</feature>
<feature type="transmembrane region" description="Helical; Name=TM1; Note=In external conformation" evidence="4">
    <location>
        <begin position="182"/>
        <end position="202"/>
    </location>
</feature>
<feature type="topological domain" description="Intravirion; in external conformation" evidence="4">
    <location>
        <begin position="203"/>
        <end position="253"/>
    </location>
</feature>
<feature type="transmembrane region" description="Helical; Name=TM2" evidence="4">
    <location>
        <begin position="254"/>
        <end position="274"/>
    </location>
</feature>
<feature type="topological domain" description="Virion surface" evidence="4">
    <location>
        <begin position="275"/>
        <end position="348"/>
    </location>
</feature>
<feature type="transmembrane region" description="Helical" evidence="4">
    <location>
        <begin position="349"/>
        <end position="369"/>
    </location>
</feature>
<feature type="topological domain" description="Intravirion" evidence="4">
    <location>
        <begin position="370"/>
        <end position="375"/>
    </location>
</feature>
<feature type="transmembrane region" description="Helical; Name=TM3" evidence="4">
    <location>
        <begin position="376"/>
        <end position="398"/>
    </location>
</feature>
<feature type="topological domain" description="Virion surface" evidence="4">
    <location>
        <begin position="399"/>
        <end position="400"/>
    </location>
</feature>
<feature type="region of interest" description="Disordered" evidence="5">
    <location>
        <begin position="1"/>
        <end position="24"/>
    </location>
</feature>
<feature type="region of interest" description="Pre-S" evidence="4">
    <location>
        <begin position="2"/>
        <end position="174"/>
    </location>
</feature>
<feature type="region of interest" description="Pre-S1" evidence="4">
    <location>
        <begin position="2"/>
        <end position="119"/>
    </location>
</feature>
<feature type="region of interest" description="Disordered" evidence="5">
    <location>
        <begin position="86"/>
        <end position="114"/>
    </location>
</feature>
<feature type="region of interest" description="Pre-S2" evidence="4">
    <location>
        <begin position="120"/>
        <end position="174"/>
    </location>
</feature>
<feature type="compositionally biased region" description="Polar residues" evidence="5">
    <location>
        <begin position="96"/>
        <end position="106"/>
    </location>
</feature>
<feature type="lipid moiety-binding region" description="N-myristoyl glycine; by host" evidence="4">
    <location>
        <position position="2"/>
    </location>
</feature>
<feature type="glycosylation site" description="N-linked (GlcNAc...) asparagine; by host" evidence="4">
    <location>
        <position position="320"/>
    </location>
</feature>
<feature type="splice variant" id="VSP_031377" description="In isoform S." evidence="6">
    <location>
        <begin position="1"/>
        <end position="174"/>
    </location>
</feature>
<feature type="splice variant" id="VSP_031378" description="In isoform M." evidence="6">
    <location>
        <begin position="1"/>
        <end position="119"/>
    </location>
</feature>
<feature type="modified residue" description="N-acetylmethionine" evidence="6">
    <location sequence="Q67926-2">
        <position position="1"/>
    </location>
</feature>
<feature type="glycosylation site" description="N-linked (GlcNAc...) asparagine" evidence="6">
    <location sequence="Q67926-2">
        <position position="4"/>
    </location>
</feature>
<dbReference type="EMBL" id="X97850">
    <property type="protein sequence ID" value="CAA66435.1"/>
    <property type="molecule type" value="Genomic_DNA"/>
</dbReference>
<dbReference type="EMBL" id="X97850">
    <property type="protein sequence ID" value="CAA66436.1"/>
    <property type="molecule type" value="Genomic_DNA"/>
</dbReference>
<dbReference type="EMBL" id="X97850">
    <property type="protein sequence ID" value="CAA66437.1"/>
    <property type="molecule type" value="Genomic_DNA"/>
</dbReference>
<dbReference type="SMR" id="Q67926"/>
<dbReference type="GlyCosmos" id="Q67926">
    <property type="glycosylation" value="2 sites, No reported glycans"/>
</dbReference>
<dbReference type="Proteomes" id="UP000007917">
    <property type="component" value="Genome"/>
</dbReference>
<dbReference type="GO" id="GO:0016020">
    <property type="term" value="C:membrane"/>
    <property type="evidence" value="ECO:0007669"/>
    <property type="project" value="UniProtKB-UniRule"/>
</dbReference>
<dbReference type="GO" id="GO:0019031">
    <property type="term" value="C:viral envelope"/>
    <property type="evidence" value="ECO:0007669"/>
    <property type="project" value="UniProtKB-KW"/>
</dbReference>
<dbReference type="GO" id="GO:0055036">
    <property type="term" value="C:virion membrane"/>
    <property type="evidence" value="ECO:0007669"/>
    <property type="project" value="UniProtKB-SubCell"/>
</dbReference>
<dbReference type="GO" id="GO:0075513">
    <property type="term" value="P:caveolin-mediated endocytosis of virus by host cell"/>
    <property type="evidence" value="ECO:0007669"/>
    <property type="project" value="UniProtKB-KW"/>
</dbReference>
<dbReference type="GO" id="GO:0039654">
    <property type="term" value="P:fusion of virus membrane with host endosome membrane"/>
    <property type="evidence" value="ECO:0007669"/>
    <property type="project" value="UniProtKB-KW"/>
</dbReference>
<dbReference type="GO" id="GO:0019062">
    <property type="term" value="P:virion attachment to host cell"/>
    <property type="evidence" value="ECO:0007669"/>
    <property type="project" value="UniProtKB-UniRule"/>
</dbReference>
<dbReference type="HAMAP" id="MF_04075">
    <property type="entry name" value="HBV_HBSAG"/>
    <property type="match status" value="1"/>
</dbReference>
<dbReference type="InterPro" id="IPR000349">
    <property type="entry name" value="HBV_HBSAG"/>
</dbReference>
<dbReference type="Pfam" id="PF00695">
    <property type="entry name" value="vMSA"/>
    <property type="match status" value="1"/>
</dbReference>
<keyword id="KW-0007">Acetylation</keyword>
<keyword id="KW-0024">Alternative initiation</keyword>
<keyword id="KW-0025">Alternative splicing</keyword>
<keyword id="KW-1166">Caveolin-mediated endocytosis of virus by host</keyword>
<keyword id="KW-1170">Fusion of virus membrane with host endosomal membrane</keyword>
<keyword id="KW-1168">Fusion of virus membrane with host membrane</keyword>
<keyword id="KW-0325">Glycoprotein</keyword>
<keyword id="KW-0945">Host-virus interaction</keyword>
<keyword id="KW-0449">Lipoprotein</keyword>
<keyword id="KW-0472">Membrane</keyword>
<keyword id="KW-0519">Myristate</keyword>
<keyword id="KW-0812">Transmembrane</keyword>
<keyword id="KW-1133">Transmembrane helix</keyword>
<keyword id="KW-1161">Viral attachment to host cell</keyword>
<keyword id="KW-0261">Viral envelope protein</keyword>
<keyword id="KW-1162">Viral penetration into host cytoplasm</keyword>
<keyword id="KW-0946">Virion</keyword>
<keyword id="KW-1164">Virus endocytosis by host</keyword>
<keyword id="KW-1160">Virus entry into host cell</keyword>
<evidence type="ECO:0000250" key="1">
    <source>
        <dbReference type="UniProtKB" id="P03138"/>
    </source>
</evidence>
<evidence type="ECO:0000250" key="2">
    <source>
        <dbReference type="UniProtKB" id="P03141"/>
    </source>
</evidence>
<evidence type="ECO:0000250" key="3">
    <source>
        <dbReference type="UniProtKB" id="Q9PWW3"/>
    </source>
</evidence>
<evidence type="ECO:0000255" key="4">
    <source>
        <dbReference type="HAMAP-Rule" id="MF_04075"/>
    </source>
</evidence>
<evidence type="ECO:0000256" key="5">
    <source>
        <dbReference type="SAM" id="MobiDB-lite"/>
    </source>
</evidence>
<evidence type="ECO:0000305" key="6"/>